<proteinExistence type="evidence at protein level"/>
<organism>
    <name type="scientific">Homo sapiens</name>
    <name type="common">Human</name>
    <dbReference type="NCBI Taxonomy" id="9606"/>
    <lineage>
        <taxon>Eukaryota</taxon>
        <taxon>Metazoa</taxon>
        <taxon>Chordata</taxon>
        <taxon>Craniata</taxon>
        <taxon>Vertebrata</taxon>
        <taxon>Euteleostomi</taxon>
        <taxon>Mammalia</taxon>
        <taxon>Eutheria</taxon>
        <taxon>Euarchontoglires</taxon>
        <taxon>Primates</taxon>
        <taxon>Haplorrhini</taxon>
        <taxon>Catarrhini</taxon>
        <taxon>Hominidae</taxon>
        <taxon>Homo</taxon>
    </lineage>
</organism>
<protein>
    <recommendedName>
        <fullName>Scavenger receptor class B member 1</fullName>
        <shortName>SRB1</shortName>
    </recommendedName>
    <alternativeName>
        <fullName>CD36 and LIMPII analogous 1</fullName>
        <shortName>CLA-1</shortName>
    </alternativeName>
    <alternativeName>
        <fullName>CD36 antigen-like 1</fullName>
    </alternativeName>
    <alternativeName>
        <fullName>Collagen type I receptor, thrombospondin receptor-like 1</fullName>
    </alternativeName>
    <alternativeName>
        <fullName>SR-BI</fullName>
    </alternativeName>
    <cdAntigenName>CD36</cdAntigenName>
</protein>
<feature type="chain" id="PRO_0000144160" description="Scavenger receptor class B member 1">
    <location>
        <begin position="1"/>
        <end position="552"/>
    </location>
</feature>
<feature type="topological domain" description="Cytoplasmic" evidence="4">
    <location>
        <begin position="1"/>
        <end position="11"/>
    </location>
</feature>
<feature type="transmembrane region" description="Helical" evidence="4">
    <location>
        <begin position="12"/>
        <end position="32"/>
    </location>
</feature>
<feature type="topological domain" description="Extracellular" evidence="4">
    <location>
        <begin position="33"/>
        <end position="443"/>
    </location>
</feature>
<feature type="transmembrane region" description="Helical" evidence="4">
    <location>
        <begin position="444"/>
        <end position="464"/>
    </location>
</feature>
<feature type="topological domain" description="Cytoplasmic" evidence="4">
    <location>
        <begin position="465"/>
        <end position="552"/>
    </location>
</feature>
<feature type="lipid moiety-binding region" description="S-palmitoyl cysteine" evidence="3">
    <location>
        <position position="462"/>
    </location>
</feature>
<feature type="glycosylation site" description="N-linked (GlcNAc...) asparagine" evidence="11">
    <location>
        <position position="102"/>
    </location>
</feature>
<feature type="glycosylation site" description="N-linked (GlcNAc...) asparagine" evidence="4">
    <location>
        <position position="108"/>
    </location>
</feature>
<feature type="glycosylation site" description="N-linked (GlcNAc...) asparagine" evidence="4">
    <location>
        <position position="173"/>
    </location>
</feature>
<feature type="glycosylation site" description="N-linked (GlcNAc...) asparagine" evidence="4">
    <location>
        <position position="212"/>
    </location>
</feature>
<feature type="glycosylation site" description="N-linked (GlcNAc...) asparagine" evidence="4">
    <location>
        <position position="227"/>
    </location>
</feature>
<feature type="glycosylation site" description="N-linked (GlcNAc...) asparagine" evidence="4">
    <location>
        <position position="255"/>
    </location>
</feature>
<feature type="glycosylation site" description="N-linked (GlcNAc...) asparagine" evidence="4">
    <location>
        <position position="310"/>
    </location>
</feature>
<feature type="glycosylation site" description="N-linked (GlcNAc...) asparagine" evidence="11">
    <location>
        <position position="330"/>
    </location>
</feature>
<feature type="glycosylation site" description="N-linked (GlcNAc...) asparagine" evidence="4">
    <location>
        <position position="383"/>
    </location>
</feature>
<feature type="disulfide bond" evidence="1">
    <location>
        <begin position="251"/>
        <end position="384"/>
    </location>
</feature>
<feature type="splice variant" id="VSP_011037" description="In isoform 4." evidence="20">
    <original>MGCSAKARWAAGALGVAGLLCAVLGAVMIVMVPSLIKQQVLK</original>
    <variation>MALQPSW</variation>
    <location>
        <begin position="1"/>
        <end position="42"/>
    </location>
</feature>
<feature type="splice variant" id="VSP_008553" description="In isoform 2." evidence="17">
    <location>
        <begin position="43"/>
        <end position="142"/>
    </location>
</feature>
<feature type="splice variant" id="VSP_008554" description="In isoform 1, isoform 2 and isoform 4." evidence="16 17 20">
    <original>VGAGQRAARADSHSLACWGKGASDRTLWPTAAWSPPPAAVLRLCRSGSGHCWGLRSTLASFACRVATTLPVLEGLGPSLGGGTGS</original>
    <variation>EKCYLFWSSSKKGSKDKEAIQAYSESLMTSAPKGSVLQEAKL</variation>
    <location>
        <begin position="468"/>
        <end position="552"/>
    </location>
</feature>
<feature type="splice variant" id="VSP_054083" description="In isoform 5." evidence="21">
    <original>VGAGQRAARADSHSLACWGKGASDRTLWPTAAWSPPPAAVLRLCRSGSGHCWGLRSTLASFACRVATTLPVLEGLGPSLGGGTGS</original>
    <variation>GPEDTVSQPGLAAGPDRPPSPYTPLLPDSPSGQPPSPTA</variation>
    <location>
        <begin position="468"/>
        <end position="552"/>
    </location>
</feature>
<feature type="sequence variant" id="VAR_017098" description="Correlated with higher plasma triglyceride concentration in subjects with hypercholesterolemia; dbSNP:rs4238001." evidence="7 8">
    <original>G</original>
    <variation>S</variation>
    <location>
        <position position="2"/>
    </location>
</feature>
<feature type="sequence variant" id="VAR_017099" description="In dbSNP:rs5891." evidence="8">
    <original>V</original>
    <variation>I</variation>
    <location>
        <position position="135"/>
    </location>
</feature>
<feature type="sequence variant" id="VAR_017100" description="In dbSNP:rs199588922." evidence="8">
    <original>G</original>
    <variation>S</variation>
    <location>
        <position position="167"/>
    </location>
</feature>
<feature type="sequence variant" id="VAR_019507" description="In dbSNP:rs10396213.">
    <original>S</original>
    <variation>G</variation>
    <location>
        <position position="229"/>
    </location>
</feature>
<feature type="sequence variant" id="VAR_064909" description="Mutation carriers have increased HDL cholesterol levels and a reduction in cholesterol efflux from macrophages; dbSNP:rs387906791." evidence="13">
    <original>P</original>
    <variation>S</variation>
    <location>
        <position position="297"/>
    </location>
</feature>
<feature type="sequence variant" id="VAR_076314" description="Probable risk factor for coronary heart disease; correlated with high HDL-cholesterol levels; results in highly reduced cholesterol uptake from HDL; markedly reduced localization at the cell surface; dbSNP:rs74830677." evidence="14">
    <original>P</original>
    <variation>L</variation>
    <location>
        <position position="376"/>
    </location>
</feature>
<feature type="sequence variant" id="VAR_017101" description="In dbSNP:rs2293440.">
    <original>C</original>
    <variation>R</variation>
    <location>
        <position position="511"/>
    </location>
</feature>
<feature type="sequence conflict" description="In Ref. 2; AAQ08185." evidence="21" ref="2">
    <original>F</original>
    <variation>L</variation>
    <location>
        <position position="70"/>
    </location>
</feature>
<feature type="sequence conflict" description="In Ref. 1; CAA80277." evidence="21" ref="1">
    <original>F</original>
    <variation>S</variation>
    <location>
        <position position="97"/>
    </location>
</feature>
<feature type="modified residue" description="Phosphoserine" evidence="22">
    <location sequence="Q8WTV0-2">
        <position position="493"/>
    </location>
</feature>
<feature type="modified residue" description="Phosphoserine" evidence="22">
    <location sequence="Q8WTV0-3">
        <position position="393"/>
    </location>
</feature>
<feature type="modified residue" description="Phosphoserine" evidence="22">
    <location sequence="Q8WTV0-4">
        <position position="458"/>
    </location>
</feature>
<name>SCRB1_HUMAN</name>
<sequence length="552" mass="60878">MGCSAKARWAAGALGVAGLLCAVLGAVMIVMVPSLIKQQVLKNVRIDPSSLSFNMWKEIPIPFYLSVYFFDVMNPSEILKGEKPQVRERGPYVYREFRHKSNITFNNNDTVSFLEYRTFQFQPSKSHGSESDYIVMPNILVLGAAVMMENKPMTLKLIMTLAFTTLGERAFMNRTVGEIMWGYKDPLVNLINKYFPGMFPFKDKFGLFAELNNSDSGLFTVFTGVQNISRIHLVDKWNGLSKVDFWHSDQCNMINGTSGQMWPPFMTPESSLEFYSPEACRSMKLMYKESGVFEGIPTYRFVAPKTLFANGSIYPPNEGFCPCLESGIQNVSTCRFSAPLFLSHPHFLNADPVLAEAVTGLHPNQEAHSLFLDIHPVTGIPMNCSVKLQLSLYMKSVAGIGQTGKIEPVVLPLLWFAESGAMEGETLHTFYTQLVLMPKVMHYAQYVLLALGCVLLLVPVICQIRSQVGAGQRAARADSHSLACWGKGASDRTLWPTAAWSPPPAAVLRLCRSGSGHCWGLRSTLASFACRVATTLPVLEGLGPSLGGGTGS</sequence>
<keyword id="KW-0025">Alternative splicing</keyword>
<keyword id="KW-1003">Cell membrane</keyword>
<keyword id="KW-1015">Disulfide bond</keyword>
<keyword id="KW-0325">Glycoprotein</keyword>
<keyword id="KW-1183">Host cell receptor for virus entry</keyword>
<keyword id="KW-0945">Host-virus interaction</keyword>
<keyword id="KW-0449">Lipoprotein</keyword>
<keyword id="KW-0472">Membrane</keyword>
<keyword id="KW-0564">Palmitate</keyword>
<keyword id="KW-0597">Phosphoprotein</keyword>
<keyword id="KW-1267">Proteomics identification</keyword>
<keyword id="KW-0675">Receptor</keyword>
<keyword id="KW-1185">Reference proteome</keyword>
<keyword id="KW-0812">Transmembrane</keyword>
<keyword id="KW-1133">Transmembrane helix</keyword>
<comment type="function">
    <text evidence="5 7 9 13 14">Receptor for different ligands such as phospholipids, cholesterol ester, lipoproteins, phosphatidylserine and apoptotic cells (PubMed:12016218, PubMed:12519372, PubMed:21226579). Receptor for HDL, mediating selective uptake of cholesteryl ether and HDL-dependent cholesterol efflux (PubMed:26965621). Also facilitates the flux of free and esterified cholesterol between the cell surface and apoB-containing lipoproteins and modified lipoproteins, although less efficiently than HDL. May be involved in the phagocytosis of apoptotic cells, via its phosphatidylserine binding activity (PubMed:12016218).</text>
</comment>
<comment type="function">
    <text evidence="6 10">(Microbial infection) Acts as a receptor for hepatitis C virus in hepatocytes and appears to facilitate its cell entry (PubMed:12356718, PubMed:12913001, PubMed:18000990). Binding between SCARB1 and the hepatitis C virus glycoprotein E2 is independent of the genotype of the viral isolate (PubMed:12356718).</text>
</comment>
<comment type="function">
    <text evidence="9">(Microbial infection) Mediates uptake of M.fortuitum, E.coli and S.aureus.</text>
</comment>
<comment type="function">
    <text evidence="15">(Microbial infection) Facilitates the entry of human coronavirus SARS-CoV-2 by acting as an entry cofactor through HDL binding.</text>
</comment>
<comment type="subunit">
    <text evidence="2">The C-terminal region binds to PDZK1.</text>
</comment>
<comment type="subunit">
    <text evidence="10">(Microbial infection) Interacts with hepatitis C virus E1:E2 glycoproteins.</text>
</comment>
<comment type="interaction">
    <interactant intactId="EBI-78657">
        <id>Q8WTV0</id>
    </interactant>
    <interactant intactId="EBI-77613">
        <id>P05067</id>
        <label>APP</label>
    </interactant>
    <organismsDiffer>false</organismsDiffer>
    <experiments>3</experiments>
</comment>
<comment type="interaction">
    <interactant intactId="EBI-78657">
        <id>Q8WTV0</id>
    </interactant>
    <interactant intactId="EBI-712921">
        <id>P60033</id>
        <label>CD81</label>
    </interactant>
    <organismsDiffer>false</organismsDiffer>
    <experiments>4</experiments>
</comment>
<comment type="interaction">
    <interactant intactId="EBI-78657">
        <id>Q8WTV0</id>
    </interactant>
    <interactant intactId="EBI-9087876">
        <id>P48730-2</id>
        <label>CSNK1D</label>
    </interactant>
    <organismsDiffer>false</organismsDiffer>
    <experiments>3</experiments>
</comment>
<comment type="interaction">
    <interactant intactId="EBI-78657">
        <id>Q8WTV0</id>
    </interactant>
    <interactant intactId="EBI-852823">
        <id>P05412</id>
        <label>JUN</label>
    </interactant>
    <organismsDiffer>false</organismsDiffer>
    <experiments>3</experiments>
</comment>
<comment type="interaction">
    <interactant intactId="EBI-78657">
        <id>Q8WTV0</id>
    </interactant>
    <interactant intactId="EBI-10172052">
        <id>P60411</id>
        <label>KRTAP10-9</label>
    </interactant>
    <organismsDiffer>false</organismsDiffer>
    <experiments>3</experiments>
</comment>
<comment type="interaction">
    <interactant intactId="EBI-78657">
        <id>Q8WTV0</id>
    </interactant>
    <interactant intactId="EBI-3958099">
        <id>P26371</id>
        <label>KRTAP5-9</label>
    </interactant>
    <organismsDiffer>false</organismsDiffer>
    <experiments>3</experiments>
</comment>
<comment type="interaction">
    <interactant intactId="EBI-78657">
        <id>Q8WTV0</id>
    </interactant>
    <interactant intactId="EBI-25475871">
        <id>PRO_0000449625</id>
        <label>rep</label>
        <dbReference type="UniProtKB" id="P0DTD1"/>
    </interactant>
    <organismsDiffer>true</organismsDiffer>
    <experiments>3</experiments>
</comment>
<comment type="interaction">
    <interactant intactId="EBI-78657">
        <id>Q8WTV0</id>
    </interactant>
    <interactant intactId="EBI-6904269">
        <id>PRO_0000037570</id>
        <dbReference type="UniProtKB" id="P27958"/>
    </interactant>
    <organismsDiffer>true</organismsDiffer>
    <experiments>2</experiments>
</comment>
<comment type="interaction">
    <interactant intactId="EBI-21529758">
        <id>Q8WTV0-2</id>
    </interactant>
    <interactant intactId="EBI-1222467">
        <id>P02649</id>
        <label>APOE</label>
    </interactant>
    <organismsDiffer>false</organismsDiffer>
    <experiments>3</experiments>
</comment>
<comment type="interaction">
    <interactant intactId="EBI-20819026">
        <id>Q8WTV0-3</id>
    </interactant>
    <interactant intactId="EBI-79387">
        <id>P19174</id>
        <label>PLCG1</label>
    </interactant>
    <organismsDiffer>false</organismsDiffer>
    <experiments>2</experiments>
</comment>
<comment type="subcellular location">
    <subcellularLocation>
        <location evidence="14">Cell membrane</location>
        <topology>Multi-pass membrane protein</topology>
    </subcellularLocation>
    <subcellularLocation>
        <location evidence="3">Membrane</location>
        <location evidence="3">Caveola</location>
        <topology>Multi-pass membrane protein</topology>
    </subcellularLocation>
    <text>Predominantly localized to cholesterol and sphingomyelin-enriched domains within the plasma membrane, called caveolae.</text>
</comment>
<comment type="alternative products">
    <event type="alternative splicing"/>
    <isoform>
        <id>Q8WTV0-1</id>
        <name>3</name>
        <sequence type="displayed"/>
    </isoform>
    <isoform>
        <id>Q8WTV0-2</id>
        <name>1</name>
        <name>SR-BI</name>
        <sequence type="described" ref="VSP_008554"/>
    </isoform>
    <isoform>
        <id>Q8WTV0-3</id>
        <name>2</name>
        <name>SR-BII</name>
        <sequence type="described" ref="VSP_008553 VSP_008554"/>
    </isoform>
    <isoform>
        <id>Q8WTV0-4</id>
        <name>4</name>
        <name>SR-BIII</name>
        <sequence type="described" ref="VSP_011037 VSP_008554"/>
    </isoform>
    <isoform>
        <id>Q8WTV0-5</id>
        <name>5</name>
        <name evidence="18">SR-BI.2</name>
        <name evidence="19">SR-BII</name>
        <sequence type="described" ref="VSP_054083"/>
    </isoform>
</comment>
<comment type="tissue specificity">
    <text>Widely expressed.</text>
</comment>
<comment type="PTM">
    <text evidence="5 11">N-glycosylated.</text>
</comment>
<comment type="PTM">
    <text evidence="3">The six cysteines of the extracellular domain are all involved in intramolecular disulfide bonds.</text>
</comment>
<comment type="polymorphism">
    <text evidence="12 13 14">Genetic variations in SCARB1 define the high density lipoprotein cholesterol level quantitative trait locus 6 (HDLCQ16) [MIM:610762].</text>
</comment>
<comment type="miscellaneous">
    <molecule>Isoform 3</molecule>
    <text>May be due to a competing donor splice site.</text>
</comment>
<comment type="similarity">
    <text evidence="21">Belongs to the CD36 family.</text>
</comment>
<gene>
    <name type="primary">SCARB1</name>
    <name type="synonym">CD36L1</name>
    <name type="synonym">CLA1</name>
</gene>
<accession>Q8WTV0</accession>
<accession>F8W8N0</accession>
<accession>Q14016</accession>
<accession>Q52LZ5</accession>
<accession>Q6KFX4</accession>
<reference key="1">
    <citation type="journal article" date="1993" name="J. Biol. Chem.">
        <title>Identification, primary structure and distribution of CLA-1, a novel member of the CD36/LIMPII gene family.</title>
        <authorList>
            <person name="Calvo D."/>
            <person name="Vega M."/>
        </authorList>
    </citation>
    <scope>NUCLEOTIDE SEQUENCE [MRNA] (ISOFORMS 1 AND 2)</scope>
    <source>
        <tissue>Promyelocyte</tissue>
    </source>
</reference>
<reference key="2">
    <citation type="submission" date="2002-05" db="EMBL/GenBank/DDBJ databases">
        <authorList>
            <person name="Hirano K."/>
            <person name="Yamashita S."/>
            <person name="Matsuzawa Y."/>
        </authorList>
    </citation>
    <scope>NUCLEOTIDE SEQUENCE [MRNA] (ISOFORM 4)</scope>
</reference>
<reference key="3">
    <citation type="journal article" date="2006" name="Nature">
        <title>The finished DNA sequence of human chromosome 12.</title>
        <authorList>
            <person name="Scherer S.E."/>
            <person name="Muzny D.M."/>
            <person name="Buhay C.J."/>
            <person name="Chen R."/>
            <person name="Cree A."/>
            <person name="Ding Y."/>
            <person name="Dugan-Rocha S."/>
            <person name="Gill R."/>
            <person name="Gunaratne P."/>
            <person name="Harris R.A."/>
            <person name="Hawes A.C."/>
            <person name="Hernandez J."/>
            <person name="Hodgson A.V."/>
            <person name="Hume J."/>
            <person name="Jackson A."/>
            <person name="Khan Z.M."/>
            <person name="Kovar-Smith C."/>
            <person name="Lewis L.R."/>
            <person name="Lozado R.J."/>
            <person name="Metzker M.L."/>
            <person name="Milosavljevic A."/>
            <person name="Miner G.R."/>
            <person name="Montgomery K.T."/>
            <person name="Morgan M.B."/>
            <person name="Nazareth L.V."/>
            <person name="Scott G."/>
            <person name="Sodergren E."/>
            <person name="Song X.-Z."/>
            <person name="Steffen D."/>
            <person name="Lovering R.C."/>
            <person name="Wheeler D.A."/>
            <person name="Worley K.C."/>
            <person name="Yuan Y."/>
            <person name="Zhang Z."/>
            <person name="Adams C.Q."/>
            <person name="Ansari-Lari M.A."/>
            <person name="Ayele M."/>
            <person name="Brown M.J."/>
            <person name="Chen G."/>
            <person name="Chen Z."/>
            <person name="Clerc-Blankenburg K.P."/>
            <person name="Davis C."/>
            <person name="Delgado O."/>
            <person name="Dinh H.H."/>
            <person name="Draper H."/>
            <person name="Gonzalez-Garay M.L."/>
            <person name="Havlak P."/>
            <person name="Jackson L.R."/>
            <person name="Jacob L.S."/>
            <person name="Kelly S.H."/>
            <person name="Li L."/>
            <person name="Li Z."/>
            <person name="Liu J."/>
            <person name="Liu W."/>
            <person name="Lu J."/>
            <person name="Maheshwari M."/>
            <person name="Nguyen B.-V."/>
            <person name="Okwuonu G.O."/>
            <person name="Pasternak S."/>
            <person name="Perez L.M."/>
            <person name="Plopper F.J.H."/>
            <person name="Santibanez J."/>
            <person name="Shen H."/>
            <person name="Tabor P.E."/>
            <person name="Verduzco D."/>
            <person name="Waldron L."/>
            <person name="Wang Q."/>
            <person name="Williams G.A."/>
            <person name="Zhang J."/>
            <person name="Zhou J."/>
            <person name="Allen C.C."/>
            <person name="Amin A.G."/>
            <person name="Anyalebechi V."/>
            <person name="Bailey M."/>
            <person name="Barbaria J.A."/>
            <person name="Bimage K.E."/>
            <person name="Bryant N.P."/>
            <person name="Burch P.E."/>
            <person name="Burkett C.E."/>
            <person name="Burrell K.L."/>
            <person name="Calderon E."/>
            <person name="Cardenas V."/>
            <person name="Carter K."/>
            <person name="Casias K."/>
            <person name="Cavazos I."/>
            <person name="Cavazos S.R."/>
            <person name="Ceasar H."/>
            <person name="Chacko J."/>
            <person name="Chan S.N."/>
            <person name="Chavez D."/>
            <person name="Christopoulos C."/>
            <person name="Chu J."/>
            <person name="Cockrell R."/>
            <person name="Cox C.D."/>
            <person name="Dang M."/>
            <person name="Dathorne S.R."/>
            <person name="David R."/>
            <person name="Davis C.M."/>
            <person name="Davy-Carroll L."/>
            <person name="Deshazo D.R."/>
            <person name="Donlin J.E."/>
            <person name="D'Souza L."/>
            <person name="Eaves K.A."/>
            <person name="Egan A."/>
            <person name="Emery-Cohen A.J."/>
            <person name="Escotto M."/>
            <person name="Flagg N."/>
            <person name="Forbes L.D."/>
            <person name="Gabisi A.M."/>
            <person name="Garza M."/>
            <person name="Hamilton C."/>
            <person name="Henderson N."/>
            <person name="Hernandez O."/>
            <person name="Hines S."/>
            <person name="Hogues M.E."/>
            <person name="Huang M."/>
            <person name="Idlebird D.G."/>
            <person name="Johnson R."/>
            <person name="Jolivet A."/>
            <person name="Jones S."/>
            <person name="Kagan R."/>
            <person name="King L.M."/>
            <person name="Leal B."/>
            <person name="Lebow H."/>
            <person name="Lee S."/>
            <person name="LeVan J.M."/>
            <person name="Lewis L.C."/>
            <person name="London P."/>
            <person name="Lorensuhewa L.M."/>
            <person name="Loulseged H."/>
            <person name="Lovett D.A."/>
            <person name="Lucier A."/>
            <person name="Lucier R.L."/>
            <person name="Ma J."/>
            <person name="Madu R.C."/>
            <person name="Mapua P."/>
            <person name="Martindale A.D."/>
            <person name="Martinez E."/>
            <person name="Massey E."/>
            <person name="Mawhiney S."/>
            <person name="Meador M.G."/>
            <person name="Mendez S."/>
            <person name="Mercado C."/>
            <person name="Mercado I.C."/>
            <person name="Merritt C.E."/>
            <person name="Miner Z.L."/>
            <person name="Minja E."/>
            <person name="Mitchell T."/>
            <person name="Mohabbat F."/>
            <person name="Mohabbat K."/>
            <person name="Montgomery B."/>
            <person name="Moore N."/>
            <person name="Morris S."/>
            <person name="Munidasa M."/>
            <person name="Ngo R.N."/>
            <person name="Nguyen N.B."/>
            <person name="Nickerson E."/>
            <person name="Nwaokelemeh O.O."/>
            <person name="Nwokenkwo S."/>
            <person name="Obregon M."/>
            <person name="Oguh M."/>
            <person name="Oragunye N."/>
            <person name="Oviedo R.J."/>
            <person name="Parish B.J."/>
            <person name="Parker D.N."/>
            <person name="Parrish J."/>
            <person name="Parks K.L."/>
            <person name="Paul H.A."/>
            <person name="Payton B.A."/>
            <person name="Perez A."/>
            <person name="Perrin W."/>
            <person name="Pickens A."/>
            <person name="Primus E.L."/>
            <person name="Pu L.-L."/>
            <person name="Puazo M."/>
            <person name="Quiles M.M."/>
            <person name="Quiroz J.B."/>
            <person name="Rabata D."/>
            <person name="Reeves K."/>
            <person name="Ruiz S.J."/>
            <person name="Shao H."/>
            <person name="Sisson I."/>
            <person name="Sonaike T."/>
            <person name="Sorelle R.P."/>
            <person name="Sutton A.E."/>
            <person name="Svatek A.F."/>
            <person name="Svetz L.A."/>
            <person name="Tamerisa K.S."/>
            <person name="Taylor T.R."/>
            <person name="Teague B."/>
            <person name="Thomas N."/>
            <person name="Thorn R.D."/>
            <person name="Trejos Z.Y."/>
            <person name="Trevino B.K."/>
            <person name="Ukegbu O.N."/>
            <person name="Urban J.B."/>
            <person name="Vasquez L.I."/>
            <person name="Vera V.A."/>
            <person name="Villasana D.M."/>
            <person name="Wang L."/>
            <person name="Ward-Moore S."/>
            <person name="Warren J.T."/>
            <person name="Wei X."/>
            <person name="White F."/>
            <person name="Williamson A.L."/>
            <person name="Wleczyk R."/>
            <person name="Wooden H.S."/>
            <person name="Wooden S.H."/>
            <person name="Yen J."/>
            <person name="Yoon L."/>
            <person name="Yoon V."/>
            <person name="Zorrilla S.E."/>
            <person name="Nelson D."/>
            <person name="Kucherlapati R."/>
            <person name="Weinstock G."/>
            <person name="Gibbs R.A."/>
        </authorList>
    </citation>
    <scope>NUCLEOTIDE SEQUENCE [LARGE SCALE GENOMIC DNA]</scope>
</reference>
<reference key="4">
    <citation type="submission" date="2005-07" db="EMBL/GenBank/DDBJ databases">
        <authorList>
            <person name="Mural R.J."/>
            <person name="Istrail S."/>
            <person name="Sutton G.G."/>
            <person name="Florea L."/>
            <person name="Halpern A.L."/>
            <person name="Mobarry C.M."/>
            <person name="Lippert R."/>
            <person name="Walenz B."/>
            <person name="Shatkay H."/>
            <person name="Dew I."/>
            <person name="Miller J.R."/>
            <person name="Flanigan M.J."/>
            <person name="Edwards N.J."/>
            <person name="Bolanos R."/>
            <person name="Fasulo D."/>
            <person name="Halldorsson B.V."/>
            <person name="Hannenhalli S."/>
            <person name="Turner R."/>
            <person name="Yooseph S."/>
            <person name="Lu F."/>
            <person name="Nusskern D.R."/>
            <person name="Shue B.C."/>
            <person name="Zheng X.H."/>
            <person name="Zhong F."/>
            <person name="Delcher A.L."/>
            <person name="Huson D.H."/>
            <person name="Kravitz S.A."/>
            <person name="Mouchard L."/>
            <person name="Reinert K."/>
            <person name="Remington K.A."/>
            <person name="Clark A.G."/>
            <person name="Waterman M.S."/>
            <person name="Eichler E.E."/>
            <person name="Adams M.D."/>
            <person name="Hunkapiller M.W."/>
            <person name="Myers E.W."/>
            <person name="Venter J.C."/>
        </authorList>
    </citation>
    <scope>NUCLEOTIDE SEQUENCE [LARGE SCALE GENOMIC DNA]</scope>
</reference>
<reference key="5">
    <citation type="journal article" date="2004" name="Genome Res.">
        <title>The status, quality, and expansion of the NIH full-length cDNA project: the Mammalian Gene Collection (MGC).</title>
        <authorList>
            <consortium name="The MGC Project Team"/>
        </authorList>
    </citation>
    <scope>NUCLEOTIDE SEQUENCE [LARGE SCALE MRNA] (ISOFORMS 1 AND 3)</scope>
    <source>
        <tissue>Liver</tissue>
        <tissue>Prostate</tissue>
        <tissue>Rhabdomyosarcoma</tissue>
    </source>
</reference>
<reference key="6">
    <citation type="journal article" date="1997" name="J. Lipid Res.">
        <title>Alternative forms of the scavenger receptor BI (SR-BI).</title>
        <authorList>
            <person name="Webb N.R."/>
            <person name="de Villiers W.J."/>
            <person name="Connell P.M."/>
            <person name="de Beer F.C."/>
            <person name="van der Westhuyzen D.R."/>
        </authorList>
    </citation>
    <scope>IDENTIFICATION (ISOFORM 5)</scope>
</reference>
<reference key="7">
    <citation type="journal article" date="1998" name="J. Biol. Chem.">
        <title>SR-BII, an isoform of the scavenger receptor BI containing an alternate cytoplasmic tail, mediates lipid transfer between high density lipoprotein and cells.</title>
        <authorList>
            <person name="Webb N.R."/>
            <person name="Connell P.M."/>
            <person name="Graf G.A."/>
            <person name="Smart E.J."/>
            <person name="de Villiers W.J."/>
            <person name="de Beer F.C."/>
            <person name="van der Westhuyzen D.R."/>
        </authorList>
    </citation>
    <scope>IDENTIFICATION (ISOFORM 5)</scope>
</reference>
<reference key="8">
    <citation type="journal article" date="2002" name="EMBO J.">
        <title>The human scavenger receptor class B type I is a novel candidate receptor for the hepatitis C virus.</title>
        <authorList>
            <person name="Scarselli E."/>
            <person name="Ansuini H."/>
            <person name="Cerino R."/>
            <person name="Roccasecca R.M."/>
            <person name="Acali S."/>
            <person name="Filocamo G."/>
            <person name="Traboni C."/>
            <person name="Nicosia A."/>
            <person name="Cortese R."/>
            <person name="Vitelli A."/>
        </authorList>
    </citation>
    <scope>FUNCTION</scope>
</reference>
<reference key="9">
    <citation type="journal article" date="2002" name="J. Biol. Chem.">
        <title>Phosphatidylserine binding of class B scavenger receptor type I, a phagocytosis receptor of testicular Sertoli cells.</title>
        <authorList>
            <person name="Kawasaki Y."/>
            <person name="Nakagawa A."/>
            <person name="Nagaosa K."/>
            <person name="Shiratsuchi A."/>
            <person name="Nakanishi Y."/>
        </authorList>
    </citation>
    <scope>FUNCTION</scope>
    <scope>GLYCOSYLATION</scope>
</reference>
<reference key="10">
    <citation type="journal article" date="2003" name="J. Biol. Chem.">
        <title>Cell entry of hepatitis C virus requires a set of co-receptors that include the CD81 tetraspanin and the SR-B1 scavenger receptor.</title>
        <authorList>
            <person name="Bartosch B."/>
            <person name="Vitelli A."/>
            <person name="Granier C."/>
            <person name="Goujon C."/>
            <person name="Dubuisson J."/>
            <person name="Pascale S."/>
            <person name="Scarselli E."/>
            <person name="Cortese R."/>
            <person name="Nicosia A."/>
            <person name="Cosset F.-L."/>
        </authorList>
    </citation>
    <scope>FUNCTION</scope>
    <scope>INTERACTION WITH HCV E1/E2 ENVELOPE HETERODIMER</scope>
</reference>
<reference key="11">
    <citation type="journal article" date="2005" name="Science">
        <title>Drosophila RNAi screen reveals CD36 family member required for mycobacterial infection.</title>
        <authorList>
            <person name="Philips J.A."/>
            <person name="Rubin E.J."/>
            <person name="Perrimon N."/>
        </authorList>
    </citation>
    <scope>FUNCTION (MICROBIAL INFECTION)</scope>
</reference>
<reference key="12">
    <citation type="journal article" date="2007" name="Hepatology">
        <title>Scavenger receptor class B type I is a key host factor for hepatitis C virus infection required for an entry step closely linked to CD81.</title>
        <authorList>
            <person name="Zeisel M.B."/>
            <person name="Koutsoudakis G."/>
            <person name="Schnober E.K."/>
            <person name="Haberstroh A."/>
            <person name="Blum H.E."/>
            <person name="Cosset F.L."/>
            <person name="Wakita T."/>
            <person name="Jaeck D."/>
            <person name="Doffoel M."/>
            <person name="Royer C."/>
            <person name="Soulier E."/>
            <person name="Schvoerer E."/>
            <person name="Schuster C."/>
            <person name="Stoll-Keller F."/>
            <person name="Bartenschlager R."/>
            <person name="Pietschmann T."/>
            <person name="Barth H."/>
            <person name="Baumert T.F."/>
        </authorList>
    </citation>
    <scope>FUNCTION (MICROBIAL INFECTION)</scope>
    <scope>INTERACTION WITH HEPATITIS C VIRUS E1 AND E2 GLYCOPROTEINS</scope>
</reference>
<reference key="13">
    <citation type="journal article" date="2009" name="J. Proteome Res.">
        <title>Glycoproteomics analysis of human liver tissue by combination of multiple enzyme digestion and hydrazide chemistry.</title>
        <authorList>
            <person name="Chen R."/>
            <person name="Jiang X."/>
            <person name="Sun D."/>
            <person name="Han G."/>
            <person name="Wang F."/>
            <person name="Ye M."/>
            <person name="Wang L."/>
            <person name="Zou H."/>
        </authorList>
    </citation>
    <scope>GLYCOSYLATION [LARGE SCALE ANALYSIS] AT ASN-102 AND ASN-330</scope>
    <source>
        <tissue>Liver</tissue>
    </source>
</reference>
<reference key="14">
    <citation type="journal article" date="2010" name="Nature">
        <title>Biological, clinical and population relevance of 95 loci for blood lipids.</title>
        <authorList>
            <person name="Teslovich T.M."/>
            <person name="Musunuru K."/>
            <person name="Smith A.V."/>
            <person name="Edmondson A.C."/>
            <person name="Stylianou I.M."/>
            <person name="Koseki M."/>
            <person name="Pirruccello J.P."/>
            <person name="Ripatti S."/>
            <person name="Chasman D.I."/>
            <person name="Willer C.J."/>
            <person name="Johansen C.T."/>
            <person name="Fouchier S.W."/>
            <person name="Isaacs A."/>
            <person name="Peloso G.M."/>
            <person name="Barbalic M."/>
            <person name="Ricketts S.L."/>
            <person name="Bis J.C."/>
            <person name="Aulchenko Y.S."/>
            <person name="Thorleifsson G."/>
            <person name="Feitosa M.F."/>
            <person name="Chambers J."/>
            <person name="Orho-Melander M."/>
            <person name="Melander O."/>
            <person name="Johnson T."/>
            <person name="Li X."/>
            <person name="Guo X."/>
            <person name="Li M."/>
            <person name="Shin Cho Y."/>
            <person name="Jin Go M."/>
            <person name="Jin Kim Y."/>
            <person name="Lee J.Y."/>
            <person name="Park T."/>
            <person name="Kim K."/>
            <person name="Sim X."/>
            <person name="Twee-Hee Ong R."/>
            <person name="Croteau-Chonka D.C."/>
            <person name="Lange L.A."/>
            <person name="Smith J.D."/>
            <person name="Song K."/>
            <person name="Hua Zhao J."/>
            <person name="Yuan X."/>
            <person name="Luan J."/>
            <person name="Lamina C."/>
            <person name="Ziegler A."/>
            <person name="Zhang W."/>
            <person name="Zee R.Y."/>
            <person name="Wright A.F."/>
            <person name="Witteman J.C."/>
            <person name="Wilson J.F."/>
            <person name="Willemsen G."/>
            <person name="Wichmann H.E."/>
            <person name="Whitfield J.B."/>
            <person name="Waterworth D.M."/>
            <person name="Wareham N.J."/>
            <person name="Waeber G."/>
            <person name="Vollenweider P."/>
            <person name="Voight B.F."/>
            <person name="Vitart V."/>
            <person name="Uitterlinden A.G."/>
            <person name="Uda M."/>
            <person name="Tuomilehto J."/>
            <person name="Thompson J.R."/>
            <person name="Tanaka T."/>
            <person name="Surakka I."/>
            <person name="Stringham H.M."/>
            <person name="Spector T.D."/>
            <person name="Soranzo N."/>
            <person name="Smit J.H."/>
            <person name="Sinisalo J."/>
            <person name="Silander K."/>
            <person name="Sijbrands E.J."/>
            <person name="Scuteri A."/>
            <person name="Scott J."/>
            <person name="Schlessinger D."/>
            <person name="Sanna S."/>
            <person name="Salomaa V."/>
            <person name="Saharinen J."/>
            <person name="Sabatti C."/>
            <person name="Ruokonen A."/>
            <person name="Rudan I."/>
            <person name="Rose L.M."/>
            <person name="Roberts R."/>
            <person name="Rieder M."/>
            <person name="Psaty B.M."/>
            <person name="Pramstaller P.P."/>
            <person name="Pichler I."/>
            <person name="Perola M."/>
            <person name="Penninx B.W."/>
            <person name="Pedersen N.L."/>
            <person name="Pattaro C."/>
            <person name="Parker A.N."/>
            <person name="Pare G."/>
            <person name="Oostra B.A."/>
            <person name="O'Donnell C.J."/>
            <person name="Nieminen M.S."/>
            <person name="Nickerson D.A."/>
            <person name="Montgomery G.W."/>
            <person name="Meitinger T."/>
            <person name="McPherson R."/>
            <person name="McCarthy M.I."/>
            <person name="McArdle W."/>
            <person name="Masson D."/>
            <person name="Martin N.G."/>
            <person name="Marroni F."/>
            <person name="Mangino M."/>
            <person name="Magnusson P.K."/>
            <person name="Lucas G."/>
            <person name="Luben R."/>
            <person name="Loos R.J."/>
            <person name="Lokki M.L."/>
            <person name="Lettre G."/>
            <person name="Langenberg C."/>
            <person name="Launer L.J."/>
            <person name="Lakatta E.G."/>
            <person name="Laaksonen R."/>
            <person name="Kyvik K.O."/>
            <person name="Kronenberg F."/>
            <person name="Konig I.R."/>
            <person name="Khaw K.T."/>
            <person name="Kaprio J."/>
            <person name="Kaplan L.M."/>
            <person name="Johansson A."/>
            <person name="Jarvelin M.R."/>
            <person name="Janssens A.C."/>
            <person name="Ingelsson E."/>
            <person name="Igl W."/>
            <person name="Kees Hovingh G."/>
            <person name="Hottenga J.J."/>
            <person name="Hofman A."/>
            <person name="Hicks A.A."/>
            <person name="Hengstenberg C."/>
            <person name="Heid I.M."/>
            <person name="Hayward C."/>
            <person name="Havulinna A.S."/>
            <person name="Hastie N.D."/>
            <person name="Harris T.B."/>
            <person name="Haritunians T."/>
            <person name="Hall A.S."/>
            <person name="Gyllensten U."/>
            <person name="Guiducci C."/>
            <person name="Groop L.C."/>
            <person name="Gonzalez E."/>
            <person name="Gieger C."/>
            <person name="Freimer N.B."/>
            <person name="Ferrucci L."/>
            <person name="Erdmann J."/>
            <person name="Elliott P."/>
            <person name="Ejebe K.G."/>
            <person name="Doring A."/>
            <person name="Dominiczak A.F."/>
            <person name="Demissie S."/>
            <person name="Deloukas P."/>
            <person name="de Geus E.J."/>
            <person name="de Faire U."/>
            <person name="Crawford G."/>
            <person name="Collins F.S."/>
            <person name="Chen Y.D."/>
            <person name="Caulfield M.J."/>
            <person name="Campbell H."/>
            <person name="Burtt N.P."/>
            <person name="Bonnycastle L.L."/>
            <person name="Boomsma D.I."/>
            <person name="Boekholdt S.M."/>
            <person name="Bergman R.N."/>
            <person name="Barroso I."/>
            <person name="Bandinelli S."/>
            <person name="Ballantyne C.M."/>
            <person name="Assimes T.L."/>
            <person name="Quertermous T."/>
            <person name="Altshuler D."/>
            <person name="Seielstad M."/>
            <person name="Wong T.Y."/>
            <person name="Tai E.S."/>
            <person name="Feranil A.B."/>
            <person name="Kuzawa C.W."/>
            <person name="Adair L.S."/>
            <person name="Taylor H.A. Jr."/>
            <person name="Borecki I.B."/>
            <person name="Gabriel S.B."/>
            <person name="Wilson J.G."/>
            <person name="Holm H."/>
            <person name="Thorsteinsdottir U."/>
            <person name="Gudnason V."/>
            <person name="Krauss R.M."/>
            <person name="Mohlke K.L."/>
            <person name="Ordovas J.M."/>
            <person name="Munroe P.B."/>
            <person name="Kooner J.S."/>
            <person name="Tall A.R."/>
            <person name="Hegele R.A."/>
            <person name="Kastelein J.J."/>
            <person name="Schadt E.E."/>
            <person name="Rotter J.I."/>
            <person name="Boerwinkle E."/>
            <person name="Strachan D.P."/>
            <person name="Mooser V."/>
            <person name="Stefansson K."/>
            <person name="Reilly M.P."/>
            <person name="Samani N.J."/>
            <person name="Schunkert H."/>
            <person name="Cupples L.A."/>
            <person name="Sandhu M.S."/>
            <person name="Ridker P.M."/>
            <person name="Rader D.J."/>
            <person name="van Duijn C.M."/>
            <person name="Peltonen L."/>
            <person name="Abecasis G.R."/>
            <person name="Boehnke M."/>
            <person name="Kathiresan S."/>
        </authorList>
    </citation>
    <scope>INVOLVEMENT IN HDLCQ16</scope>
</reference>
<reference key="15">
    <citation type="journal article" date="2011" name="BMC Syst. Biol.">
        <title>Initial characterization of the human central proteome.</title>
        <authorList>
            <person name="Burkard T.R."/>
            <person name="Planyavsky M."/>
            <person name="Kaupe I."/>
            <person name="Breitwieser F.P."/>
            <person name="Buerckstuemmer T."/>
            <person name="Bennett K.L."/>
            <person name="Superti-Furga G."/>
            <person name="Colinge J."/>
        </authorList>
    </citation>
    <scope>IDENTIFICATION BY MASS SPECTROMETRY [LARGE SCALE ANALYSIS]</scope>
</reference>
<reference key="16">
    <citation type="journal article" date="2014" name="J. Proteomics">
        <title>An enzyme assisted RP-RPLC approach for in-depth analysis of human liver phosphoproteome.</title>
        <authorList>
            <person name="Bian Y."/>
            <person name="Song C."/>
            <person name="Cheng K."/>
            <person name="Dong M."/>
            <person name="Wang F."/>
            <person name="Huang J."/>
            <person name="Sun D."/>
            <person name="Wang L."/>
            <person name="Ye M."/>
            <person name="Zou H."/>
        </authorList>
    </citation>
    <scope>PHOSPHORYLATION [LARGE SCALE ANALYSIS] AT SER-493 (ISOFORM 1)</scope>
    <scope>PHOSPHORYLATION [LARGE SCALE ANALYSIS] AT SER-393 (ISOFORM 2)</scope>
    <scope>PHOSPHORYLATION [LARGE SCALE ANALYSIS] AT SER-458 (ISOFORM 4)</scope>
    <scope>IDENTIFICATION BY MASS SPECTROMETRY [LARGE SCALE ANALYSIS]</scope>
    <source>
        <tissue>Liver</tissue>
    </source>
</reference>
<reference key="17">
    <citation type="journal article" date="2020" name="Nat. Metab.">
        <title>HDL-scavenger receptor B type 1 facilitates SARS-CoV-2 entry.</title>
        <authorList>
            <person name="Wei C."/>
            <person name="Wan L."/>
            <person name="Yan Q."/>
            <person name="Wang X."/>
            <person name="Zhang J."/>
            <person name="Yang X."/>
            <person name="Zhang Y."/>
            <person name="Fan C."/>
            <person name="Li D."/>
            <person name="Deng Y."/>
            <person name="Sun J."/>
            <person name="Gong J."/>
            <person name="Yang X."/>
            <person name="Wang Y."/>
            <person name="Wang X."/>
            <person name="Li J."/>
            <person name="Yang H."/>
            <person name="Li H."/>
            <person name="Zhang Z."/>
            <person name="Wang R."/>
            <person name="Du P."/>
            <person name="Zong Y."/>
            <person name="Yin F."/>
            <person name="Zhang W."/>
            <person name="Wang N."/>
            <person name="Peng Y."/>
            <person name="Lin H."/>
            <person name="Feng J."/>
            <person name="Qin C."/>
            <person name="Chen W."/>
            <person name="Gao Q."/>
            <person name="Zhang R."/>
            <person name="Cao Y."/>
            <person name="Zhong H."/>
        </authorList>
    </citation>
    <scope>FUNCTION (MICROBIAL INFECTION)</scope>
</reference>
<reference key="18">
    <citation type="journal article" date="2016" name="Science">
        <title>Rare variant in scavenger receptor BI raises HDL cholesterol and increases risk of coronary heart disease.</title>
        <authorList>
            <consortium name="CHD Exome+ Consortium"/>
            <consortium name="CARDIoGRAM Exome Consortium"/>
            <consortium name="Global Lipids Genetics Consortium"/>
            <person name="Zanoni P."/>
            <person name="Khetarpal S.A."/>
            <person name="Larach D.B."/>
            <person name="Hancock-Cerutti W.F."/>
            <person name="Millar J.S."/>
            <person name="Cuchel M."/>
            <person name="DerOhannessian S."/>
            <person name="Kontush A."/>
            <person name="Surendran P."/>
            <person name="Saleheen D."/>
            <person name="Trompet S."/>
            <person name="Jukema J.W."/>
            <person name="De Craen A."/>
            <person name="Deloukas P."/>
            <person name="Sattar N."/>
            <person name="Ford I."/>
            <person name="Packard C."/>
            <person name="Majumder A."/>
            <person name="Alam D.S."/>
            <person name="Di Angelantonio E."/>
            <person name="Abecasis G."/>
            <person name="Chowdhury R."/>
            <person name="Erdmann J."/>
            <person name="Nordestgaard B.G."/>
            <person name="Nielsen S.F."/>
            <person name="Tybjaerg-Hansen A."/>
            <person name="Schmidt R.F."/>
            <person name="Kuulasmaa K."/>
            <person name="Liu D.J."/>
            <person name="Perola M."/>
            <person name="Blankenberg S."/>
            <person name="Salomaa V."/>
            <person name="Maennistoe S."/>
            <person name="Amouyel P."/>
            <person name="Arveiler D."/>
            <person name="Ferrieres J."/>
            <person name="Mueller-Nurasyid M."/>
            <person name="Ferrario M."/>
            <person name="Kee F."/>
            <person name="Willer C.J."/>
            <person name="Samani N."/>
            <person name="Schunkert H."/>
            <person name="Butterworth A.S."/>
            <person name="Howson J.M."/>
            <person name="Peloso G.M."/>
            <person name="Stitziel N.O."/>
            <person name="Danesh J."/>
            <person name="Kathiresan S."/>
            <person name="Rader D.J."/>
        </authorList>
    </citation>
    <scope>FUNCTION</scope>
    <scope>SUBCELLULAR LOCATION</scope>
    <scope>INVOLVEMENT IN HDLCQ16</scope>
    <scope>VARIANT LEU-376</scope>
    <scope>CHARACTERIZATION OF VARIANT LEU-376</scope>
</reference>
<reference key="19">
    <citation type="journal article" date="2003" name="Clin. Genet.">
        <title>Polymorphisms at the SRBI locus are associated with lipoprotein levels in subjects with heterozygous familial hypercholesterolemia.</title>
        <authorList>
            <person name="Tai E.S."/>
            <person name="Adiconis X."/>
            <person name="Ordovas J.M."/>
            <person name="Carmena-Ramon R."/>
            <person name="Real J."/>
            <person name="Corella D."/>
            <person name="Ascaso J."/>
            <person name="Carmena R."/>
        </authorList>
    </citation>
    <scope>FUNCTION</scope>
    <scope>VARIANT SER-2</scope>
</reference>
<reference key="20">
    <citation type="journal article" date="2003" name="Hum. Mol. Genet.">
        <title>Association of extreme blood lipid profile phenotypic variation with 11 reverse cholesterol transport genes and 10 non-genetic cardiovascular disease risk factors.</title>
        <authorList>
            <person name="Morabia A."/>
            <person name="Cayanis E."/>
            <person name="Costanza M.C."/>
            <person name="Ross B.M."/>
            <person name="Flaherty M.S."/>
            <person name="Alvin G.B."/>
            <person name="Das K."/>
            <person name="Gilliam T.C."/>
        </authorList>
    </citation>
    <scope>VARIANTS SER-2; ILE-135 AND SER-167</scope>
</reference>
<reference key="21">
    <citation type="journal article" date="2011" name="N. Engl. J. Med.">
        <title>Genetic variant of the scavenger receptor BI in humans.</title>
        <authorList>
            <person name="Vergeer M."/>
            <person name="Korporaal S.J."/>
            <person name="Franssen R."/>
            <person name="Meurs I."/>
            <person name="Out R."/>
            <person name="Hovingh G.K."/>
            <person name="Hoekstra M."/>
            <person name="Sierts J.A."/>
            <person name="Dallinga-Thie G.M."/>
            <person name="Motazacker M.M."/>
            <person name="Holleboom A.G."/>
            <person name="Van Berkel T.J."/>
            <person name="Kastelein J.J."/>
            <person name="Van Eck M."/>
            <person name="Kuivenhoven J.A."/>
        </authorList>
    </citation>
    <scope>FUNCTION</scope>
    <scope>VARIANT SER-297</scope>
    <scope>INVOLVEMENT IN HDLCQ16</scope>
</reference>
<evidence type="ECO:0000250" key="1"/>
<evidence type="ECO:0000250" key="2">
    <source>
        <dbReference type="UniProtKB" id="P97943"/>
    </source>
</evidence>
<evidence type="ECO:0000250" key="3">
    <source>
        <dbReference type="UniProtKB" id="Q61009"/>
    </source>
</evidence>
<evidence type="ECO:0000255" key="4"/>
<evidence type="ECO:0000269" key="5">
    <source>
    </source>
</evidence>
<evidence type="ECO:0000269" key="6">
    <source>
    </source>
</evidence>
<evidence type="ECO:0000269" key="7">
    <source>
    </source>
</evidence>
<evidence type="ECO:0000269" key="8">
    <source>
    </source>
</evidence>
<evidence type="ECO:0000269" key="9">
    <source>
    </source>
</evidence>
<evidence type="ECO:0000269" key="10">
    <source>
    </source>
</evidence>
<evidence type="ECO:0000269" key="11">
    <source>
    </source>
</evidence>
<evidence type="ECO:0000269" key="12">
    <source>
    </source>
</evidence>
<evidence type="ECO:0000269" key="13">
    <source>
    </source>
</evidence>
<evidence type="ECO:0000269" key="14">
    <source>
    </source>
</evidence>
<evidence type="ECO:0000269" key="15">
    <source>
    </source>
</evidence>
<evidence type="ECO:0000303" key="16">
    <source>
    </source>
</evidence>
<evidence type="ECO:0000303" key="17">
    <source>
    </source>
</evidence>
<evidence type="ECO:0000303" key="18">
    <source>
    </source>
</evidence>
<evidence type="ECO:0000303" key="19">
    <source>
    </source>
</evidence>
<evidence type="ECO:0000303" key="20">
    <source ref="2"/>
</evidence>
<evidence type="ECO:0000305" key="21"/>
<evidence type="ECO:0007744" key="22">
    <source>
    </source>
</evidence>
<dbReference type="EMBL" id="Z22555">
    <property type="protein sequence ID" value="CAA80277.1"/>
    <property type="molecule type" value="mRNA"/>
</dbReference>
<dbReference type="EMBL" id="AF515445">
    <property type="protein sequence ID" value="AAQ08185.1"/>
    <property type="molecule type" value="mRNA"/>
</dbReference>
<dbReference type="EMBL" id="AC073593">
    <property type="status" value="NOT_ANNOTATED_CDS"/>
    <property type="molecule type" value="Genomic_DNA"/>
</dbReference>
<dbReference type="EMBL" id="AC126309">
    <property type="status" value="NOT_ANNOTATED_CDS"/>
    <property type="molecule type" value="Genomic_DNA"/>
</dbReference>
<dbReference type="EMBL" id="CH471054">
    <property type="protein sequence ID" value="EAW98459.1"/>
    <property type="molecule type" value="Genomic_DNA"/>
</dbReference>
<dbReference type="EMBL" id="BC022087">
    <property type="status" value="NOT_ANNOTATED_CDS"/>
    <property type="molecule type" value="mRNA"/>
</dbReference>
<dbReference type="EMBL" id="BC080647">
    <property type="protein sequence ID" value="AAH80647.1"/>
    <property type="molecule type" value="mRNA"/>
</dbReference>
<dbReference type="EMBL" id="BC093732">
    <property type="protein sequence ID" value="AAH93732.1"/>
    <property type="molecule type" value="mRNA"/>
</dbReference>
<dbReference type="EMBL" id="BC112037">
    <property type="protein sequence ID" value="AAI12038.1"/>
    <property type="molecule type" value="mRNA"/>
</dbReference>
<dbReference type="CCDS" id="CCDS45008.1">
    <molecule id="Q8WTV0-5"/>
</dbReference>
<dbReference type="CCDS" id="CCDS91769.1">
    <molecule id="Q8WTV0-1"/>
</dbReference>
<dbReference type="CCDS" id="CCDS9259.1">
    <molecule id="Q8WTV0-2"/>
</dbReference>
<dbReference type="PIR" id="S36656">
    <property type="entry name" value="A48528"/>
</dbReference>
<dbReference type="RefSeq" id="NP_001076428.1">
    <molecule id="Q8WTV0-5"/>
    <property type="nucleotide sequence ID" value="NM_001082959.2"/>
</dbReference>
<dbReference type="RefSeq" id="NP_001354910.1">
    <molecule id="Q8WTV0-1"/>
    <property type="nucleotide sequence ID" value="NM_001367981.1"/>
</dbReference>
<dbReference type="RefSeq" id="NP_001354918.1">
    <molecule id="Q8WTV0-2"/>
    <property type="nucleotide sequence ID" value="NM_001367989.1"/>
</dbReference>
<dbReference type="RefSeq" id="NP_005496.4">
    <molecule id="Q8WTV0-2"/>
    <property type="nucleotide sequence ID" value="NM_005505.4"/>
</dbReference>
<dbReference type="SMR" id="Q8WTV0"/>
<dbReference type="BioGRID" id="107387">
    <property type="interactions" value="150"/>
</dbReference>
<dbReference type="FunCoup" id="Q8WTV0">
    <property type="interactions" value="1087"/>
</dbReference>
<dbReference type="IntAct" id="Q8WTV0">
    <property type="interactions" value="72"/>
</dbReference>
<dbReference type="MINT" id="Q8WTV0"/>
<dbReference type="STRING" id="9606.ENSP00000261693"/>
<dbReference type="BindingDB" id="Q8WTV0"/>
<dbReference type="ChEMBL" id="CHEMBL1914272"/>
<dbReference type="DrugBank" id="DB14003">
    <property type="generic name" value="alpha-Tocopherol acetate"/>
</dbReference>
<dbReference type="DrugBank" id="DB00144">
    <property type="generic name" value="Phosphatidyl serine"/>
</dbReference>
<dbReference type="DrugBank" id="DB11635">
    <property type="generic name" value="Tocofersolan"/>
</dbReference>
<dbReference type="DrugBank" id="DB11251">
    <property type="generic name" value="Tocopherol"/>
</dbReference>
<dbReference type="DrugBank" id="DB00163">
    <property type="generic name" value="Vitamin E"/>
</dbReference>
<dbReference type="SwissLipids" id="SLP:000001519"/>
<dbReference type="TCDB" id="9.B.39.1.3">
    <property type="family name" value="the long chain fatty acid translocase (lcfat) family"/>
</dbReference>
<dbReference type="GlyConnect" id="1722">
    <property type="glycosylation" value="1 N-Linked glycan (1 site)"/>
</dbReference>
<dbReference type="GlyCosmos" id="Q8WTV0">
    <property type="glycosylation" value="9 sites, 1 glycan"/>
</dbReference>
<dbReference type="GlyGen" id="Q8WTV0">
    <property type="glycosylation" value="14 sites, 10 N-linked glycans (6 sites), 2 O-linked glycans (2 sites)"/>
</dbReference>
<dbReference type="iPTMnet" id="Q8WTV0"/>
<dbReference type="PhosphoSitePlus" id="Q8WTV0"/>
<dbReference type="SwissPalm" id="Q8WTV0"/>
<dbReference type="BioMuta" id="SCARB1"/>
<dbReference type="DMDM" id="37999904"/>
<dbReference type="jPOST" id="Q8WTV0"/>
<dbReference type="MassIVE" id="Q8WTV0"/>
<dbReference type="PaxDb" id="9606-ENSP00000261693"/>
<dbReference type="PeptideAtlas" id="Q8WTV0"/>
<dbReference type="ProteomicsDB" id="30176"/>
<dbReference type="ProteomicsDB" id="74602">
    <molecule id="Q8WTV0-1"/>
</dbReference>
<dbReference type="ProteomicsDB" id="74603">
    <molecule id="Q8WTV0-2"/>
</dbReference>
<dbReference type="ProteomicsDB" id="74604">
    <molecule id="Q8WTV0-3"/>
</dbReference>
<dbReference type="ProteomicsDB" id="74605">
    <molecule id="Q8WTV0-4"/>
</dbReference>
<dbReference type="Pumba" id="Q8WTV0"/>
<dbReference type="Antibodypedia" id="31879">
    <property type="antibodies" value="649 antibodies from 40 providers"/>
</dbReference>
<dbReference type="DNASU" id="949"/>
<dbReference type="Ensembl" id="ENST00000261693.11">
    <molecule id="Q8WTV0-2"/>
    <property type="protein sequence ID" value="ENSP00000261693.6"/>
    <property type="gene ID" value="ENSG00000073060.17"/>
</dbReference>
<dbReference type="Ensembl" id="ENST00000339570.9">
    <molecule id="Q8WTV0-5"/>
    <property type="protein sequence ID" value="ENSP00000343795.4"/>
    <property type="gene ID" value="ENSG00000073060.17"/>
</dbReference>
<dbReference type="Ensembl" id="ENST00000415380.6">
    <molecule id="Q8WTV0-1"/>
    <property type="protein sequence ID" value="ENSP00000414979.2"/>
    <property type="gene ID" value="ENSG00000073060.17"/>
</dbReference>
<dbReference type="GeneID" id="949"/>
<dbReference type="KEGG" id="hsa:949"/>
<dbReference type="MANE-Select" id="ENST00000261693.11">
    <molecule id="Q8WTV0-2"/>
    <property type="protein sequence ID" value="ENSP00000261693.6"/>
    <property type="RefSeq nucleotide sequence ID" value="NM_005505.5"/>
    <property type="RefSeq protein sequence ID" value="NP_005496.4"/>
</dbReference>
<dbReference type="UCSC" id="uc001ugm.5">
    <molecule id="Q8WTV0-1"/>
    <property type="organism name" value="human"/>
</dbReference>
<dbReference type="AGR" id="HGNC:1664"/>
<dbReference type="CTD" id="949"/>
<dbReference type="DisGeNET" id="949"/>
<dbReference type="GeneCards" id="SCARB1"/>
<dbReference type="HGNC" id="HGNC:1664">
    <property type="gene designation" value="SCARB1"/>
</dbReference>
<dbReference type="HPA" id="ENSG00000073060">
    <property type="expression patterns" value="Tissue enriched (adrenal)"/>
</dbReference>
<dbReference type="MalaCards" id="SCARB1"/>
<dbReference type="MIM" id="601040">
    <property type="type" value="gene"/>
</dbReference>
<dbReference type="MIM" id="610762">
    <property type="type" value="phenotype"/>
</dbReference>
<dbReference type="neXtProt" id="NX_Q8WTV0"/>
<dbReference type="OpenTargets" id="ENSG00000073060"/>
<dbReference type="Orphanet" id="181428">
    <property type="disease" value="Familial Hyperalphalipoproteinemia"/>
</dbReference>
<dbReference type="PharmGKB" id="PA97"/>
<dbReference type="VEuPathDB" id="HostDB:ENSG00000073060"/>
<dbReference type="eggNOG" id="KOG3776">
    <property type="taxonomic scope" value="Eukaryota"/>
</dbReference>
<dbReference type="GeneTree" id="ENSGT00940000153372"/>
<dbReference type="InParanoid" id="Q8WTV0"/>
<dbReference type="OMA" id="DENYWIN"/>
<dbReference type="OrthoDB" id="514335at2759"/>
<dbReference type="PAN-GO" id="Q8WTV0">
    <property type="GO annotations" value="10 GO annotations based on evolutionary models"/>
</dbReference>
<dbReference type="PhylomeDB" id="Q8WTV0"/>
<dbReference type="TreeFam" id="TF317925"/>
<dbReference type="PathwayCommons" id="Q8WTV0"/>
<dbReference type="Reactome" id="R-HSA-3000471">
    <molecule id="Q8WTV0-2"/>
    <property type="pathway name" value="Scavenging by Class B Receptors"/>
</dbReference>
<dbReference type="Reactome" id="R-HSA-8964011">
    <molecule id="Q8WTV0-2"/>
    <property type="pathway name" value="HDL clearance"/>
</dbReference>
<dbReference type="SignaLink" id="Q8WTV0"/>
<dbReference type="SIGNOR" id="Q8WTV0"/>
<dbReference type="BioGRID-ORCS" id="949">
    <property type="hits" value="15 hits in 1176 CRISPR screens"/>
</dbReference>
<dbReference type="ChiTaRS" id="SCARB1">
    <property type="organism name" value="human"/>
</dbReference>
<dbReference type="GeneWiki" id="SCARB1"/>
<dbReference type="GenomeRNAi" id="949"/>
<dbReference type="Pharos" id="Q8WTV0">
    <property type="development level" value="Tchem"/>
</dbReference>
<dbReference type="PRO" id="PR:Q8WTV0"/>
<dbReference type="Proteomes" id="UP000005640">
    <property type="component" value="Chromosome 12"/>
</dbReference>
<dbReference type="RNAct" id="Q8WTV0">
    <property type="molecule type" value="protein"/>
</dbReference>
<dbReference type="Bgee" id="ENSG00000073060">
    <property type="expression patterns" value="Expressed in right adrenal gland cortex and 163 other cell types or tissues"/>
</dbReference>
<dbReference type="ExpressionAtlas" id="Q8WTV0">
    <property type="expression patterns" value="baseline and differential"/>
</dbReference>
<dbReference type="GO" id="GO:0005901">
    <property type="term" value="C:caveola"/>
    <property type="evidence" value="ECO:0000318"/>
    <property type="project" value="GO_Central"/>
</dbReference>
<dbReference type="GO" id="GO:0009986">
    <property type="term" value="C:cell surface"/>
    <property type="evidence" value="ECO:0000250"/>
    <property type="project" value="BHF-UCL"/>
</dbReference>
<dbReference type="GO" id="GO:0030666">
    <property type="term" value="C:endocytic vesicle membrane"/>
    <property type="evidence" value="ECO:0000304"/>
    <property type="project" value="Reactome"/>
</dbReference>
<dbReference type="GO" id="GO:0070062">
    <property type="term" value="C:extracellular exosome"/>
    <property type="evidence" value="ECO:0007005"/>
    <property type="project" value="UniProtKB"/>
</dbReference>
<dbReference type="GO" id="GO:0043231">
    <property type="term" value="C:intracellular membrane-bounded organelle"/>
    <property type="evidence" value="ECO:0000314"/>
    <property type="project" value="HPA"/>
</dbReference>
<dbReference type="GO" id="GO:0005765">
    <property type="term" value="C:lysosomal membrane"/>
    <property type="evidence" value="ECO:0007005"/>
    <property type="project" value="UniProtKB"/>
</dbReference>
<dbReference type="GO" id="GO:0005764">
    <property type="term" value="C:lysosome"/>
    <property type="evidence" value="ECO:0000314"/>
    <property type="project" value="HPA"/>
</dbReference>
<dbReference type="GO" id="GO:0005886">
    <property type="term" value="C:plasma membrane"/>
    <property type="evidence" value="ECO:0000314"/>
    <property type="project" value="BHF-UCL"/>
</dbReference>
<dbReference type="GO" id="GO:0005545">
    <property type="term" value="F:1-phosphatidylinositol binding"/>
    <property type="evidence" value="ECO:0000304"/>
    <property type="project" value="BHF-UCL"/>
</dbReference>
<dbReference type="GO" id="GO:0001540">
    <property type="term" value="F:amyloid-beta binding"/>
    <property type="evidence" value="ECO:0007669"/>
    <property type="project" value="Ensembl"/>
</dbReference>
<dbReference type="GO" id="GO:0034186">
    <property type="term" value="F:apolipoprotein A-I binding"/>
    <property type="evidence" value="ECO:0000353"/>
    <property type="project" value="BHF-UCL"/>
</dbReference>
<dbReference type="GO" id="GO:0034185">
    <property type="term" value="F:apolipoprotein binding"/>
    <property type="evidence" value="ECO:0000353"/>
    <property type="project" value="BHF-UCL"/>
</dbReference>
<dbReference type="GO" id="GO:0008035">
    <property type="term" value="F:high-density lipoprotein particle binding"/>
    <property type="evidence" value="ECO:0000314"/>
    <property type="project" value="BHF-UCL"/>
</dbReference>
<dbReference type="GO" id="GO:0070506">
    <property type="term" value="F:high-density lipoprotein particle receptor activity"/>
    <property type="evidence" value="ECO:0000314"/>
    <property type="project" value="BHF-UCL"/>
</dbReference>
<dbReference type="GO" id="GO:0008289">
    <property type="term" value="F:lipid binding"/>
    <property type="evidence" value="ECO:0000318"/>
    <property type="project" value="GO_Central"/>
</dbReference>
<dbReference type="GO" id="GO:0001530">
    <property type="term" value="F:lipopolysaccharide binding"/>
    <property type="evidence" value="ECO:0000314"/>
    <property type="project" value="BHF-UCL"/>
</dbReference>
<dbReference type="GO" id="GO:0001875">
    <property type="term" value="F:lipopolysaccharide immune receptor activity"/>
    <property type="evidence" value="ECO:0000314"/>
    <property type="project" value="BHF-UCL"/>
</dbReference>
<dbReference type="GO" id="GO:0030169">
    <property type="term" value="F:low-density lipoprotein particle binding"/>
    <property type="evidence" value="ECO:0000314"/>
    <property type="project" value="BHF-UCL"/>
</dbReference>
<dbReference type="GO" id="GO:0001786">
    <property type="term" value="F:phosphatidylserine binding"/>
    <property type="evidence" value="ECO:0000250"/>
    <property type="project" value="BHF-UCL"/>
</dbReference>
<dbReference type="GO" id="GO:0005044">
    <property type="term" value="F:scavenger receptor activity"/>
    <property type="evidence" value="ECO:0000318"/>
    <property type="project" value="GO_Central"/>
</dbReference>
<dbReference type="GO" id="GO:0001618">
    <property type="term" value="F:virus receptor activity"/>
    <property type="evidence" value="ECO:0007669"/>
    <property type="project" value="UniProtKB-KW"/>
</dbReference>
<dbReference type="GO" id="GO:0044406">
    <property type="term" value="P:adhesion of symbiont to host"/>
    <property type="evidence" value="ECO:0000315"/>
    <property type="project" value="BHF-UCL"/>
</dbReference>
<dbReference type="GO" id="GO:0043534">
    <property type="term" value="P:blood vessel endothelial cell migration"/>
    <property type="evidence" value="ECO:0007669"/>
    <property type="project" value="Ensembl"/>
</dbReference>
<dbReference type="GO" id="GO:0006707">
    <property type="term" value="P:cholesterol catabolic process"/>
    <property type="evidence" value="ECO:0007669"/>
    <property type="project" value="Ensembl"/>
</dbReference>
<dbReference type="GO" id="GO:0033344">
    <property type="term" value="P:cholesterol efflux"/>
    <property type="evidence" value="ECO:0000315"/>
    <property type="project" value="AgBase"/>
</dbReference>
<dbReference type="GO" id="GO:0042632">
    <property type="term" value="P:cholesterol homeostasis"/>
    <property type="evidence" value="ECO:0000250"/>
    <property type="project" value="BHF-UCL"/>
</dbReference>
<dbReference type="GO" id="GO:0070508">
    <property type="term" value="P:cholesterol import"/>
    <property type="evidence" value="ECO:0000315"/>
    <property type="project" value="UniProtKB"/>
</dbReference>
<dbReference type="GO" id="GO:0032497">
    <property type="term" value="P:detection of lipopolysaccharide"/>
    <property type="evidence" value="ECO:0000314"/>
    <property type="project" value="BHF-UCL"/>
</dbReference>
<dbReference type="GO" id="GO:0001935">
    <property type="term" value="P:endothelial cell proliferation"/>
    <property type="evidence" value="ECO:0007669"/>
    <property type="project" value="Ensembl"/>
</dbReference>
<dbReference type="GO" id="GO:0055097">
    <property type="term" value="P:high density lipoprotein particle mediated signaling"/>
    <property type="evidence" value="ECO:0000314"/>
    <property type="project" value="BHF-UCL"/>
</dbReference>
<dbReference type="GO" id="GO:0034384">
    <property type="term" value="P:high-density lipoprotein particle clearance"/>
    <property type="evidence" value="ECO:0000314"/>
    <property type="project" value="BHF-UCL"/>
</dbReference>
<dbReference type="GO" id="GO:0034375">
    <property type="term" value="P:high-density lipoprotein particle remodeling"/>
    <property type="evidence" value="ECO:0000250"/>
    <property type="project" value="BHF-UCL"/>
</dbReference>
<dbReference type="GO" id="GO:0098856">
    <property type="term" value="P:intestinal lipid absorption"/>
    <property type="evidence" value="ECO:0007669"/>
    <property type="project" value="Ensembl"/>
</dbReference>
<dbReference type="GO" id="GO:0015920">
    <property type="term" value="P:lipopolysaccharide transport"/>
    <property type="evidence" value="ECO:0000314"/>
    <property type="project" value="BHF-UCL"/>
</dbReference>
<dbReference type="GO" id="GO:0034383">
    <property type="term" value="P:low-density lipoprotein particle clearance"/>
    <property type="evidence" value="ECO:0000250"/>
    <property type="project" value="BHF-UCL"/>
</dbReference>
<dbReference type="GO" id="GO:0015914">
    <property type="term" value="P:phospholipid transport"/>
    <property type="evidence" value="ECO:0000250"/>
    <property type="project" value="BHF-UCL"/>
</dbReference>
<dbReference type="GO" id="GO:0034381">
    <property type="term" value="P:plasma lipoprotein particle clearance"/>
    <property type="evidence" value="ECO:0000318"/>
    <property type="project" value="GO_Central"/>
</dbReference>
<dbReference type="GO" id="GO:0010886">
    <property type="term" value="P:positive regulation of cholesterol storage"/>
    <property type="evidence" value="ECO:0000314"/>
    <property type="project" value="BHF-UCL"/>
</dbReference>
<dbReference type="GO" id="GO:0010595">
    <property type="term" value="P:positive regulation of endothelial cell migration"/>
    <property type="evidence" value="ECO:0000304"/>
    <property type="project" value="BHF-UCL"/>
</dbReference>
<dbReference type="GO" id="GO:0010750">
    <property type="term" value="P:positive regulation of nitric oxide mediated signal transduction"/>
    <property type="evidence" value="ECO:0000314"/>
    <property type="project" value="BHF-UCL"/>
</dbReference>
<dbReference type="GO" id="GO:1902070">
    <property type="term" value="P:positive regulation of sphingolipid mediated signaling pathway"/>
    <property type="evidence" value="ECO:0000314"/>
    <property type="project" value="BHF-UCL"/>
</dbReference>
<dbReference type="GO" id="GO:0010867">
    <property type="term" value="P:positive regulation of triglyceride biosynthetic process"/>
    <property type="evidence" value="ECO:0000250"/>
    <property type="project" value="BHF-UCL"/>
</dbReference>
<dbReference type="GO" id="GO:0043654">
    <property type="term" value="P:recognition of apoptotic cell"/>
    <property type="evidence" value="ECO:0000314"/>
    <property type="project" value="BHF-UCL"/>
</dbReference>
<dbReference type="GO" id="GO:0050764">
    <property type="term" value="P:regulation of phagocytosis"/>
    <property type="evidence" value="ECO:0000305"/>
    <property type="project" value="BHF-UCL"/>
</dbReference>
<dbReference type="GO" id="GO:0010899">
    <property type="term" value="P:regulation of phosphatidylcholine catabolic process"/>
    <property type="evidence" value="ECO:0000250"/>
    <property type="project" value="BHF-UCL"/>
</dbReference>
<dbReference type="GO" id="GO:0043691">
    <property type="term" value="P:reverse cholesterol transport"/>
    <property type="evidence" value="ECO:0000314"/>
    <property type="project" value="BHF-UCL"/>
</dbReference>
<dbReference type="GO" id="GO:0070328">
    <property type="term" value="P:triglyceride homeostasis"/>
    <property type="evidence" value="ECO:0000250"/>
    <property type="project" value="BHF-UCL"/>
</dbReference>
<dbReference type="GO" id="GO:0042311">
    <property type="term" value="P:vasodilation"/>
    <property type="evidence" value="ECO:0000314"/>
    <property type="project" value="BHF-UCL"/>
</dbReference>
<dbReference type="GO" id="GO:0035461">
    <property type="term" value="P:vitamin transmembrane transport"/>
    <property type="evidence" value="ECO:0000315"/>
    <property type="project" value="AgBase"/>
</dbReference>
<dbReference type="GO" id="GO:0042060">
    <property type="term" value="P:wound healing"/>
    <property type="evidence" value="ECO:0000304"/>
    <property type="project" value="BHF-UCL"/>
</dbReference>
<dbReference type="InterPro" id="IPR005428">
    <property type="entry name" value="CD36/SCARB1/SNMP1"/>
</dbReference>
<dbReference type="InterPro" id="IPR002159">
    <property type="entry name" value="CD36_fam"/>
</dbReference>
<dbReference type="PANTHER" id="PTHR11923:SF110">
    <property type="entry name" value="SCAVENGER RECEPTOR CLASS B MEMBER 1"/>
    <property type="match status" value="1"/>
</dbReference>
<dbReference type="PANTHER" id="PTHR11923">
    <property type="entry name" value="SCAVENGER RECEPTOR CLASS B TYPE-1 SR-B1"/>
    <property type="match status" value="1"/>
</dbReference>
<dbReference type="Pfam" id="PF01130">
    <property type="entry name" value="CD36"/>
    <property type="match status" value="1"/>
</dbReference>
<dbReference type="PRINTS" id="PR01610">
    <property type="entry name" value="CD36ANTIGEN"/>
</dbReference>
<dbReference type="PRINTS" id="PR01609">
    <property type="entry name" value="CD36FAMILY"/>
</dbReference>